<sequence>MNLFRFCSGLKVLGYFMILLVVAVVGVSYYAVVVSTWWPILIRGDHGALSALAALIIFVFHFLLIMLLWSYFTTVFTDPGSVPEHFRREMGGGDSLEAGTSTDQGAFGSLGYCTKCRNVKPPRCHHCSVCQRCVLKMDHHCVWIVNCVGARNYKFFLLFLFYTFLETMLDVIVLLPSFIEFFSQAIKHSSSPGKLASLVLAFVLNFAFVLSLLCFVVMHISLLSSNTTSVEVHEKNGEVRWKYDLGKKKNFEQVFGKKKAFWLLPLYSKDDIDNITSLEGLEFPTCSDIDP</sequence>
<feature type="chain" id="PRO_0000363601" description="Probable protein S-acyltransferase 12">
    <location>
        <begin position="1"/>
        <end position="291"/>
    </location>
</feature>
<feature type="transmembrane region" description="Helical" evidence="2">
    <location>
        <begin position="14"/>
        <end position="34"/>
    </location>
</feature>
<feature type="transmembrane region" description="Helical" evidence="2">
    <location>
        <begin position="49"/>
        <end position="69"/>
    </location>
</feature>
<feature type="transmembrane region" description="Helical" evidence="2">
    <location>
        <begin position="155"/>
        <end position="175"/>
    </location>
</feature>
<feature type="transmembrane region" description="Helical" evidence="2">
    <location>
        <begin position="198"/>
        <end position="218"/>
    </location>
</feature>
<feature type="domain" description="DHHC" evidence="3">
    <location>
        <begin position="111"/>
        <end position="161"/>
    </location>
</feature>
<feature type="active site" description="S-palmitoyl cysteine intermediate" evidence="1">
    <location>
        <position position="141"/>
    </location>
</feature>
<evidence type="ECO:0000250" key="1"/>
<evidence type="ECO:0000255" key="2"/>
<evidence type="ECO:0000255" key="3">
    <source>
        <dbReference type="PROSITE-ProRule" id="PRU00067"/>
    </source>
</evidence>
<evidence type="ECO:0000269" key="4">
    <source ref="5"/>
</evidence>
<evidence type="ECO:0000305" key="5"/>
<proteinExistence type="evidence at transcript level"/>
<protein>
    <recommendedName>
        <fullName>Probable protein S-acyltransferase 12</fullName>
        <ecNumber>2.3.1.225</ecNumber>
    </recommendedName>
    <alternativeName>
        <fullName>Probable palmitoyltransferase At4g00840</fullName>
    </alternativeName>
    <alternativeName>
        <fullName>Zinc finger DHHC domain-containing protein At4g00840</fullName>
    </alternativeName>
</protein>
<dbReference type="EC" id="2.3.1.225"/>
<dbReference type="EMBL" id="AF013294">
    <property type="protein sequence ID" value="AAB62854.1"/>
    <property type="status" value="ALT_SEQ"/>
    <property type="molecule type" value="Genomic_DNA"/>
</dbReference>
<dbReference type="EMBL" id="AL161472">
    <property type="protein sequence ID" value="CAB80893.1"/>
    <property type="status" value="ALT_SEQ"/>
    <property type="molecule type" value="Genomic_DNA"/>
</dbReference>
<dbReference type="EMBL" id="CP002687">
    <property type="protein sequence ID" value="AEE81944.1"/>
    <property type="molecule type" value="Genomic_DNA"/>
</dbReference>
<dbReference type="EMBL" id="BT020391">
    <property type="protein sequence ID" value="AAV91337.1"/>
    <property type="molecule type" value="mRNA"/>
</dbReference>
<dbReference type="EMBL" id="BT020511">
    <property type="protein sequence ID" value="AAW39012.1"/>
    <property type="molecule type" value="mRNA"/>
</dbReference>
<dbReference type="EMBL" id="AK229293">
    <property type="protein sequence ID" value="BAF01156.1"/>
    <property type="molecule type" value="mRNA"/>
</dbReference>
<dbReference type="PIR" id="T01562">
    <property type="entry name" value="T01562"/>
</dbReference>
<dbReference type="RefSeq" id="NP_567193.2">
    <property type="nucleotide sequence ID" value="NM_116310.5"/>
</dbReference>
<dbReference type="SMR" id="Q5M757"/>
<dbReference type="FunCoup" id="Q5M757">
    <property type="interactions" value="2643"/>
</dbReference>
<dbReference type="STRING" id="3702.Q5M757"/>
<dbReference type="iPTMnet" id="Q5M757"/>
<dbReference type="PaxDb" id="3702-AT4G00840.1"/>
<dbReference type="ProteomicsDB" id="242937"/>
<dbReference type="EnsemblPlants" id="AT4G00840.1">
    <property type="protein sequence ID" value="AT4G00840.1"/>
    <property type="gene ID" value="AT4G00840"/>
</dbReference>
<dbReference type="GeneID" id="826193"/>
<dbReference type="Gramene" id="AT4G00840.1">
    <property type="protein sequence ID" value="AT4G00840.1"/>
    <property type="gene ID" value="AT4G00840"/>
</dbReference>
<dbReference type="KEGG" id="ath:AT4G00840"/>
<dbReference type="Araport" id="AT4G00840"/>
<dbReference type="TAIR" id="AT4G00840"/>
<dbReference type="eggNOG" id="KOG1315">
    <property type="taxonomic scope" value="Eukaryota"/>
</dbReference>
<dbReference type="HOGENOM" id="CLU_027721_2_1_1"/>
<dbReference type="InParanoid" id="Q5M757"/>
<dbReference type="OMA" id="CFVVMHI"/>
<dbReference type="PhylomeDB" id="Q5M757"/>
<dbReference type="BRENDA" id="2.3.1.225">
    <property type="organism ID" value="399"/>
</dbReference>
<dbReference type="PRO" id="PR:Q5M757"/>
<dbReference type="Proteomes" id="UP000006548">
    <property type="component" value="Chromosome 4"/>
</dbReference>
<dbReference type="ExpressionAtlas" id="Q5M757">
    <property type="expression patterns" value="baseline and differential"/>
</dbReference>
<dbReference type="GO" id="GO:0005886">
    <property type="term" value="C:plasma membrane"/>
    <property type="evidence" value="ECO:0007669"/>
    <property type="project" value="UniProtKB-SubCell"/>
</dbReference>
<dbReference type="GO" id="GO:0019706">
    <property type="term" value="F:protein-cysteine S-palmitoyltransferase activity"/>
    <property type="evidence" value="ECO:0007669"/>
    <property type="project" value="UniProtKB-EC"/>
</dbReference>
<dbReference type="InterPro" id="IPR001594">
    <property type="entry name" value="Palmitoyltrfase_DHHC"/>
</dbReference>
<dbReference type="InterPro" id="IPR039859">
    <property type="entry name" value="PFA4/ZDH16/20/ERF2-like"/>
</dbReference>
<dbReference type="PANTHER" id="PTHR12246">
    <property type="entry name" value="PALMITOYLTRANSFERASE ZDHHC16"/>
    <property type="match status" value="1"/>
</dbReference>
<dbReference type="Pfam" id="PF01529">
    <property type="entry name" value="DHHC"/>
    <property type="match status" value="1"/>
</dbReference>
<dbReference type="PROSITE" id="PS50216">
    <property type="entry name" value="DHHC"/>
    <property type="match status" value="1"/>
</dbReference>
<comment type="function">
    <text evidence="1 4">Palmitoyl acyltransferase.</text>
</comment>
<comment type="catalytic activity">
    <reaction>
        <text>L-cysteinyl-[protein] + hexadecanoyl-CoA = S-hexadecanoyl-L-cysteinyl-[protein] + CoA</text>
        <dbReference type="Rhea" id="RHEA:36683"/>
        <dbReference type="Rhea" id="RHEA-COMP:10131"/>
        <dbReference type="Rhea" id="RHEA-COMP:11032"/>
        <dbReference type="ChEBI" id="CHEBI:29950"/>
        <dbReference type="ChEBI" id="CHEBI:57287"/>
        <dbReference type="ChEBI" id="CHEBI:57379"/>
        <dbReference type="ChEBI" id="CHEBI:74151"/>
        <dbReference type="EC" id="2.3.1.225"/>
    </reaction>
</comment>
<comment type="subcellular location">
    <subcellularLocation>
        <location evidence="5">Cell membrane</location>
        <topology evidence="5">Multi-pass membrane protein</topology>
    </subcellularLocation>
</comment>
<comment type="domain">
    <text evidence="1">The DHHC domain is required for palmitoyltransferase activity.</text>
</comment>
<comment type="similarity">
    <text evidence="5">Belongs to the DHHC palmitoyltransferase family.</text>
</comment>
<comment type="sequence caution" evidence="5">
    <conflict type="erroneous gene model prediction">
        <sequence resource="EMBL-CDS" id="AAB62854"/>
    </conflict>
</comment>
<comment type="sequence caution" evidence="5">
    <conflict type="erroneous gene model prediction">
        <sequence resource="EMBL-CDS" id="CAB80893"/>
    </conflict>
</comment>
<name>ZDH15_ARATH</name>
<gene>
    <name type="primary">PAT12</name>
    <name type="ordered locus">At4g00840</name>
    <name type="ORF">A_TM018A10.8</name>
    <name type="ORF">T18A10.14</name>
</gene>
<reference key="1">
    <citation type="journal article" date="1999" name="Nature">
        <title>Sequence and analysis of chromosome 4 of the plant Arabidopsis thaliana.</title>
        <authorList>
            <person name="Mayer K.F.X."/>
            <person name="Schueller C."/>
            <person name="Wambutt R."/>
            <person name="Murphy G."/>
            <person name="Volckaert G."/>
            <person name="Pohl T."/>
            <person name="Duesterhoeft A."/>
            <person name="Stiekema W."/>
            <person name="Entian K.-D."/>
            <person name="Terryn N."/>
            <person name="Harris B."/>
            <person name="Ansorge W."/>
            <person name="Brandt P."/>
            <person name="Grivell L.A."/>
            <person name="Rieger M."/>
            <person name="Weichselgartner M."/>
            <person name="de Simone V."/>
            <person name="Obermaier B."/>
            <person name="Mache R."/>
            <person name="Mueller M."/>
            <person name="Kreis M."/>
            <person name="Delseny M."/>
            <person name="Puigdomenech P."/>
            <person name="Watson M."/>
            <person name="Schmidtheini T."/>
            <person name="Reichert B."/>
            <person name="Portetelle D."/>
            <person name="Perez-Alonso M."/>
            <person name="Boutry M."/>
            <person name="Bancroft I."/>
            <person name="Vos P."/>
            <person name="Hoheisel J."/>
            <person name="Zimmermann W."/>
            <person name="Wedler H."/>
            <person name="Ridley P."/>
            <person name="Langham S.-A."/>
            <person name="McCullagh B."/>
            <person name="Bilham L."/>
            <person name="Robben J."/>
            <person name="van der Schueren J."/>
            <person name="Grymonprez B."/>
            <person name="Chuang Y.-J."/>
            <person name="Vandenbussche F."/>
            <person name="Braeken M."/>
            <person name="Weltjens I."/>
            <person name="Voet M."/>
            <person name="Bastiaens I."/>
            <person name="Aert R."/>
            <person name="Defoor E."/>
            <person name="Weitzenegger T."/>
            <person name="Bothe G."/>
            <person name="Ramsperger U."/>
            <person name="Hilbert H."/>
            <person name="Braun M."/>
            <person name="Holzer E."/>
            <person name="Brandt A."/>
            <person name="Peters S."/>
            <person name="van Staveren M."/>
            <person name="Dirkse W."/>
            <person name="Mooijman P."/>
            <person name="Klein Lankhorst R."/>
            <person name="Rose M."/>
            <person name="Hauf J."/>
            <person name="Koetter P."/>
            <person name="Berneiser S."/>
            <person name="Hempel S."/>
            <person name="Feldpausch M."/>
            <person name="Lamberth S."/>
            <person name="Van den Daele H."/>
            <person name="De Keyser A."/>
            <person name="Buysshaert C."/>
            <person name="Gielen J."/>
            <person name="Villarroel R."/>
            <person name="De Clercq R."/>
            <person name="van Montagu M."/>
            <person name="Rogers J."/>
            <person name="Cronin A."/>
            <person name="Quail M.A."/>
            <person name="Bray-Allen S."/>
            <person name="Clark L."/>
            <person name="Doggett J."/>
            <person name="Hall S."/>
            <person name="Kay M."/>
            <person name="Lennard N."/>
            <person name="McLay K."/>
            <person name="Mayes R."/>
            <person name="Pettett A."/>
            <person name="Rajandream M.A."/>
            <person name="Lyne M."/>
            <person name="Benes V."/>
            <person name="Rechmann S."/>
            <person name="Borkova D."/>
            <person name="Bloecker H."/>
            <person name="Scharfe M."/>
            <person name="Grimm M."/>
            <person name="Loehnert T.-H."/>
            <person name="Dose S."/>
            <person name="de Haan M."/>
            <person name="Maarse A.C."/>
            <person name="Schaefer M."/>
            <person name="Mueller-Auer S."/>
            <person name="Gabel C."/>
            <person name="Fuchs M."/>
            <person name="Fartmann B."/>
            <person name="Granderath K."/>
            <person name="Dauner D."/>
            <person name="Herzl A."/>
            <person name="Neumann S."/>
            <person name="Argiriou A."/>
            <person name="Vitale D."/>
            <person name="Liguori R."/>
            <person name="Piravandi E."/>
            <person name="Massenet O."/>
            <person name="Quigley F."/>
            <person name="Clabauld G."/>
            <person name="Muendlein A."/>
            <person name="Felber R."/>
            <person name="Schnabl S."/>
            <person name="Hiller R."/>
            <person name="Schmidt W."/>
            <person name="Lecharny A."/>
            <person name="Aubourg S."/>
            <person name="Chefdor F."/>
            <person name="Cooke R."/>
            <person name="Berger C."/>
            <person name="Monfort A."/>
            <person name="Casacuberta E."/>
            <person name="Gibbons T."/>
            <person name="Weber N."/>
            <person name="Vandenbol M."/>
            <person name="Bargues M."/>
            <person name="Terol J."/>
            <person name="Torres A."/>
            <person name="Perez-Perez A."/>
            <person name="Purnelle B."/>
            <person name="Bent E."/>
            <person name="Johnson S."/>
            <person name="Tacon D."/>
            <person name="Jesse T."/>
            <person name="Heijnen L."/>
            <person name="Schwarz S."/>
            <person name="Scholler P."/>
            <person name="Heber S."/>
            <person name="Francs P."/>
            <person name="Bielke C."/>
            <person name="Frishman D."/>
            <person name="Haase D."/>
            <person name="Lemcke K."/>
            <person name="Mewes H.-W."/>
            <person name="Stocker S."/>
            <person name="Zaccaria P."/>
            <person name="Bevan M."/>
            <person name="Wilson R.K."/>
            <person name="de la Bastide M."/>
            <person name="Habermann K."/>
            <person name="Parnell L."/>
            <person name="Dedhia N."/>
            <person name="Gnoj L."/>
            <person name="Schutz K."/>
            <person name="Huang E."/>
            <person name="Spiegel L."/>
            <person name="Sekhon M."/>
            <person name="Murray J."/>
            <person name="Sheet P."/>
            <person name="Cordes M."/>
            <person name="Abu-Threideh J."/>
            <person name="Stoneking T."/>
            <person name="Kalicki J."/>
            <person name="Graves T."/>
            <person name="Harmon G."/>
            <person name="Edwards J."/>
            <person name="Latreille P."/>
            <person name="Courtney L."/>
            <person name="Cloud J."/>
            <person name="Abbott A."/>
            <person name="Scott K."/>
            <person name="Johnson D."/>
            <person name="Minx P."/>
            <person name="Bentley D."/>
            <person name="Fulton B."/>
            <person name="Miller N."/>
            <person name="Greco T."/>
            <person name="Kemp K."/>
            <person name="Kramer J."/>
            <person name="Fulton L."/>
            <person name="Mardis E."/>
            <person name="Dante M."/>
            <person name="Pepin K."/>
            <person name="Hillier L.W."/>
            <person name="Nelson J."/>
            <person name="Spieth J."/>
            <person name="Ryan E."/>
            <person name="Andrews S."/>
            <person name="Geisel C."/>
            <person name="Layman D."/>
            <person name="Du H."/>
            <person name="Ali J."/>
            <person name="Berghoff A."/>
            <person name="Jones K."/>
            <person name="Drone K."/>
            <person name="Cotton M."/>
            <person name="Joshu C."/>
            <person name="Antonoiu B."/>
            <person name="Zidanic M."/>
            <person name="Strong C."/>
            <person name="Sun H."/>
            <person name="Lamar B."/>
            <person name="Yordan C."/>
            <person name="Ma P."/>
            <person name="Zhong J."/>
            <person name="Preston R."/>
            <person name="Vil D."/>
            <person name="Shekher M."/>
            <person name="Matero A."/>
            <person name="Shah R."/>
            <person name="Swaby I.K."/>
            <person name="O'Shaughnessy A."/>
            <person name="Rodriguez M."/>
            <person name="Hoffman J."/>
            <person name="Till S."/>
            <person name="Granat S."/>
            <person name="Shohdy N."/>
            <person name="Hasegawa A."/>
            <person name="Hameed A."/>
            <person name="Lodhi M."/>
            <person name="Johnson A."/>
            <person name="Chen E."/>
            <person name="Marra M.A."/>
            <person name="Martienssen R."/>
            <person name="McCombie W.R."/>
        </authorList>
    </citation>
    <scope>NUCLEOTIDE SEQUENCE [LARGE SCALE GENOMIC DNA]</scope>
    <source>
        <strain>cv. Columbia</strain>
    </source>
</reference>
<reference key="2">
    <citation type="journal article" date="2017" name="Plant J.">
        <title>Araport11: a complete reannotation of the Arabidopsis thaliana reference genome.</title>
        <authorList>
            <person name="Cheng C.Y."/>
            <person name="Krishnakumar V."/>
            <person name="Chan A.P."/>
            <person name="Thibaud-Nissen F."/>
            <person name="Schobel S."/>
            <person name="Town C.D."/>
        </authorList>
    </citation>
    <scope>GENOME REANNOTATION</scope>
    <source>
        <strain>cv. Columbia</strain>
    </source>
</reference>
<reference key="3">
    <citation type="submission" date="2005-01" db="EMBL/GenBank/DDBJ databases">
        <title>Arabidopsis ORF clones.</title>
        <authorList>
            <person name="Kim C.J."/>
            <person name="Chen H."/>
            <person name="Cheuk R.F."/>
            <person name="Shinn P."/>
            <person name="Ecker J.R."/>
        </authorList>
    </citation>
    <scope>NUCLEOTIDE SEQUENCE [LARGE SCALE MRNA]</scope>
    <source>
        <strain>cv. Columbia</strain>
    </source>
</reference>
<reference key="4">
    <citation type="submission" date="2006-07" db="EMBL/GenBank/DDBJ databases">
        <title>Large-scale analysis of RIKEN Arabidopsis full-length (RAFL) cDNAs.</title>
        <authorList>
            <person name="Totoki Y."/>
            <person name="Seki M."/>
            <person name="Ishida J."/>
            <person name="Nakajima M."/>
            <person name="Enju A."/>
            <person name="Kamiya A."/>
            <person name="Narusaka M."/>
            <person name="Shin-i T."/>
            <person name="Nakagawa M."/>
            <person name="Sakamoto N."/>
            <person name="Oishi K."/>
            <person name="Kohara Y."/>
            <person name="Kobayashi M."/>
            <person name="Toyoda A."/>
            <person name="Sakaki Y."/>
            <person name="Sakurai T."/>
            <person name="Iida K."/>
            <person name="Akiyama K."/>
            <person name="Satou M."/>
            <person name="Toyoda T."/>
            <person name="Konagaya A."/>
            <person name="Carninci P."/>
            <person name="Kawai J."/>
            <person name="Hayashizaki Y."/>
            <person name="Shinozaki K."/>
        </authorList>
    </citation>
    <scope>NUCLEOTIDE SEQUENCE [LARGE SCALE MRNA]</scope>
    <source>
        <strain>cv. Columbia</strain>
    </source>
</reference>
<reference key="5">
    <citation type="book" date="2007" name="Proceedings of the 18th international conference on Arabidopsis research">
        <title>S-acylation: dynamic control of plant development and sigalling by lipid modification of proteins.</title>
        <authorList>
            <person name="Hemsley P.A."/>
            <person name="Taylor L."/>
            <person name="Grierson C.S."/>
        </authorList>
    </citation>
    <scope>GENE FAMILY</scope>
    <scope>FUNCTION</scope>
</reference>
<reference key="6">
    <citation type="journal article" date="2012" name="Plant Physiol.">
        <title>Genomics and localization of the Arabidopsis DHHC-cysteine-rich domain S-acyltransferase protein family.</title>
        <authorList>
            <person name="Batistic O."/>
        </authorList>
    </citation>
    <scope>SUBCELLULAR LOCATION</scope>
    <scope>GENE FAMILY</scope>
    <scope>NOMENCLATURE</scope>
</reference>
<keyword id="KW-0012">Acyltransferase</keyword>
<keyword id="KW-1003">Cell membrane</keyword>
<keyword id="KW-0449">Lipoprotein</keyword>
<keyword id="KW-0472">Membrane</keyword>
<keyword id="KW-0564">Palmitate</keyword>
<keyword id="KW-1185">Reference proteome</keyword>
<keyword id="KW-0808">Transferase</keyword>
<keyword id="KW-0812">Transmembrane</keyword>
<keyword id="KW-1133">Transmembrane helix</keyword>
<accession>Q5M757</accession>
<accession>O23092</accession>
<organism>
    <name type="scientific">Arabidopsis thaliana</name>
    <name type="common">Mouse-ear cress</name>
    <dbReference type="NCBI Taxonomy" id="3702"/>
    <lineage>
        <taxon>Eukaryota</taxon>
        <taxon>Viridiplantae</taxon>
        <taxon>Streptophyta</taxon>
        <taxon>Embryophyta</taxon>
        <taxon>Tracheophyta</taxon>
        <taxon>Spermatophyta</taxon>
        <taxon>Magnoliopsida</taxon>
        <taxon>eudicotyledons</taxon>
        <taxon>Gunneridae</taxon>
        <taxon>Pentapetalae</taxon>
        <taxon>rosids</taxon>
        <taxon>malvids</taxon>
        <taxon>Brassicales</taxon>
        <taxon>Brassicaceae</taxon>
        <taxon>Camelineae</taxon>
        <taxon>Arabidopsis</taxon>
    </lineage>
</organism>